<keyword id="KW-1185">Reference proteome</keyword>
<feature type="chain" id="PRO_0000154909" description="UPF0111 protein HI_1603">
    <location>
        <begin position="1"/>
        <end position="226"/>
    </location>
</feature>
<proteinExistence type="evidence at protein level"/>
<protein>
    <recommendedName>
        <fullName>UPF0111 protein HI_1603</fullName>
    </recommendedName>
</protein>
<comment type="similarity">
    <text evidence="1">Belongs to the UPF0111 family.</text>
</comment>
<accession>P44271</accession>
<evidence type="ECO:0000305" key="1"/>
<sequence length="226" mass="26483">MAMNNILGLFAHSPLKPLQKHSEKVTECSDLLIPFFQTTFSKNWEQAEEKRLEISQCEREADSLKREIRLKLPRGLFLPIDRTDLLELVTQQDKLANYAKDIAGRMIGRQFGIPEEMQEEFLHYVKRSLDAIHQAHRVIEEMDKLLETGFKGRELKLVNDMIQELDSIEDDTDQMQIKLRKMLYTIESRYNPIDVMFLYKIIEWVGVLADQAQRVGSRIELMLARS</sequence>
<reference key="1">
    <citation type="journal article" date="1995" name="Science">
        <title>Whole-genome random sequencing and assembly of Haemophilus influenzae Rd.</title>
        <authorList>
            <person name="Fleischmann R.D."/>
            <person name="Adams M.D."/>
            <person name="White O."/>
            <person name="Clayton R.A."/>
            <person name="Kirkness E.F."/>
            <person name="Kerlavage A.R."/>
            <person name="Bult C.J."/>
            <person name="Tomb J.-F."/>
            <person name="Dougherty B.A."/>
            <person name="Merrick J.M."/>
            <person name="McKenney K."/>
            <person name="Sutton G.G."/>
            <person name="FitzHugh W."/>
            <person name="Fields C.A."/>
            <person name="Gocayne J.D."/>
            <person name="Scott J.D."/>
            <person name="Shirley R."/>
            <person name="Liu L.-I."/>
            <person name="Glodek A."/>
            <person name="Kelley J.M."/>
            <person name="Weidman J.F."/>
            <person name="Phillips C.A."/>
            <person name="Spriggs T."/>
            <person name="Hedblom E."/>
            <person name="Cotton M.D."/>
            <person name="Utterback T.R."/>
            <person name="Hanna M.C."/>
            <person name="Nguyen D.T."/>
            <person name="Saudek D.M."/>
            <person name="Brandon R.C."/>
            <person name="Fine L.D."/>
            <person name="Fritchman J.L."/>
            <person name="Fuhrmann J.L."/>
            <person name="Geoghagen N.S.M."/>
            <person name="Gnehm C.L."/>
            <person name="McDonald L.A."/>
            <person name="Small K.V."/>
            <person name="Fraser C.M."/>
            <person name="Smith H.O."/>
            <person name="Venter J.C."/>
        </authorList>
    </citation>
    <scope>NUCLEOTIDE SEQUENCE [LARGE SCALE GENOMIC DNA]</scope>
    <source>
        <strain>ATCC 51907 / DSM 11121 / KW20 / Rd</strain>
    </source>
</reference>
<reference key="2">
    <citation type="journal article" date="2000" name="Electrophoresis">
        <title>Two-dimensional map of the proteome of Haemophilus influenzae.</title>
        <authorList>
            <person name="Langen H."/>
            <person name="Takacs B."/>
            <person name="Evers S."/>
            <person name="Berndt P."/>
            <person name="Lahm H.W."/>
            <person name="Wipf B."/>
            <person name="Gray C."/>
            <person name="Fountoulakis M."/>
        </authorList>
    </citation>
    <scope>IDENTIFICATION BY MASS SPECTROMETRY</scope>
    <source>
        <strain>ATCC 51907 / DSM 11121 / KW20 / Rd</strain>
    </source>
</reference>
<gene>
    <name type="ordered locus">HI_1603</name>
</gene>
<name>Y1603_HAEIN</name>
<dbReference type="EMBL" id="L42023">
    <property type="protein sequence ID" value="AAC23247.1"/>
    <property type="molecule type" value="Genomic_DNA"/>
</dbReference>
<dbReference type="PIR" id="B64038">
    <property type="entry name" value="B64038"/>
</dbReference>
<dbReference type="RefSeq" id="NP_439745.1">
    <property type="nucleotide sequence ID" value="NC_000907.1"/>
</dbReference>
<dbReference type="SMR" id="P44271"/>
<dbReference type="STRING" id="71421.HI_1603"/>
<dbReference type="EnsemblBacteria" id="AAC23247">
    <property type="protein sequence ID" value="AAC23247"/>
    <property type="gene ID" value="HI_1603"/>
</dbReference>
<dbReference type="KEGG" id="hin:HI_1603"/>
<dbReference type="PATRIC" id="fig|71421.8.peg.1676"/>
<dbReference type="eggNOG" id="COG1392">
    <property type="taxonomic scope" value="Bacteria"/>
</dbReference>
<dbReference type="HOGENOM" id="CLU_104916_0_1_6"/>
<dbReference type="OrthoDB" id="9780540at2"/>
<dbReference type="PhylomeDB" id="P44271"/>
<dbReference type="BioCyc" id="HINF71421:G1GJ1-1616-MONOMER"/>
<dbReference type="Proteomes" id="UP000000579">
    <property type="component" value="Chromosome"/>
</dbReference>
<dbReference type="Gene3D" id="1.20.58.220">
    <property type="entry name" value="Phosphate transport system protein phou homolog 2, domain 2"/>
    <property type="match status" value="1"/>
</dbReference>
<dbReference type="InterPro" id="IPR002727">
    <property type="entry name" value="DUF47"/>
</dbReference>
<dbReference type="InterPro" id="IPR038078">
    <property type="entry name" value="PhoU-like_sf"/>
</dbReference>
<dbReference type="InterPro" id="IPR018445">
    <property type="entry name" value="Put_Phosphate_transp_reg"/>
</dbReference>
<dbReference type="NCBIfam" id="TIGR00153">
    <property type="entry name" value="TIGR00153 family protein"/>
    <property type="match status" value="1"/>
</dbReference>
<dbReference type="PANTHER" id="PTHR36536">
    <property type="entry name" value="UPF0111 PROTEIN HI_1603"/>
    <property type="match status" value="1"/>
</dbReference>
<dbReference type="PANTHER" id="PTHR36536:SF3">
    <property type="entry name" value="UPF0111 PROTEIN HI_1603"/>
    <property type="match status" value="1"/>
</dbReference>
<dbReference type="Pfam" id="PF01865">
    <property type="entry name" value="PhoU_div"/>
    <property type="match status" value="1"/>
</dbReference>
<dbReference type="SUPFAM" id="SSF109755">
    <property type="entry name" value="PhoU-like"/>
    <property type="match status" value="1"/>
</dbReference>
<organism>
    <name type="scientific">Haemophilus influenzae (strain ATCC 51907 / DSM 11121 / KW20 / Rd)</name>
    <dbReference type="NCBI Taxonomy" id="71421"/>
    <lineage>
        <taxon>Bacteria</taxon>
        <taxon>Pseudomonadati</taxon>
        <taxon>Pseudomonadota</taxon>
        <taxon>Gammaproteobacteria</taxon>
        <taxon>Pasteurellales</taxon>
        <taxon>Pasteurellaceae</taxon>
        <taxon>Haemophilus</taxon>
    </lineage>
</organism>